<feature type="chain" id="PRO_0000448796" description="Probable 2' cyclic ADP-D-ribose synthase BdTIR">
    <location>
        <begin position="1"/>
        <end position="224"/>
    </location>
</feature>
<feature type="domain" description="TIR" evidence="3">
    <location>
        <begin position="51"/>
        <end position="178"/>
    </location>
</feature>
<feature type="active site" evidence="3">
    <location>
        <position position="127"/>
    </location>
</feature>
<feature type="binding site" evidence="2">
    <location>
        <begin position="60"/>
        <end position="65"/>
    </location>
    <ligand>
        <name>NAD(+)</name>
        <dbReference type="ChEBI" id="CHEBI:57540"/>
    </ligand>
</feature>
<feature type="binding site" evidence="2">
    <location>
        <position position="93"/>
    </location>
    <ligand>
        <name>NAD(+)</name>
        <dbReference type="ChEBI" id="CHEBI:57540"/>
    </ligand>
</feature>
<feature type="site" description="Important for ADPR cyclization" evidence="1">
    <location>
        <position position="123"/>
    </location>
</feature>
<proteinExistence type="evidence at protein level"/>
<dbReference type="EC" id="3.2.2.-" evidence="8 4"/>
<dbReference type="EC" id="3.2.2.6" evidence="4"/>
<dbReference type="EMBL" id="CM000880">
    <property type="protein sequence ID" value="KQK15683.1"/>
    <property type="molecule type" value="Genomic_DNA"/>
</dbReference>
<dbReference type="SMR" id="I1GTC2"/>
<dbReference type="FunCoup" id="I1GTC2">
    <property type="interactions" value="1045"/>
</dbReference>
<dbReference type="EnsemblPlants" id="KQK15683">
    <property type="protein sequence ID" value="KQK15683"/>
    <property type="gene ID" value="BRADI_1g24377v3"/>
</dbReference>
<dbReference type="Gramene" id="KQK15683">
    <property type="protein sequence ID" value="KQK15683"/>
    <property type="gene ID" value="BRADI_1g24377v3"/>
</dbReference>
<dbReference type="KEGG" id="bdi:100831488"/>
<dbReference type="eggNOG" id="ENOG502RXQV">
    <property type="taxonomic scope" value="Eukaryota"/>
</dbReference>
<dbReference type="HOGENOM" id="CLU_087415_1_0_1"/>
<dbReference type="InParanoid" id="I1GTC2"/>
<dbReference type="OMA" id="FNFMKQS"/>
<dbReference type="OrthoDB" id="6078042at2759"/>
<dbReference type="Proteomes" id="UP000008810">
    <property type="component" value="Chromosome 1"/>
</dbReference>
<dbReference type="GO" id="GO:0003953">
    <property type="term" value="F:NAD+ nucleosidase activity"/>
    <property type="evidence" value="ECO:0000314"/>
    <property type="project" value="UniProtKB"/>
</dbReference>
<dbReference type="GO" id="GO:0061809">
    <property type="term" value="F:NAD+ nucleosidase activity, cyclic ADP-ribose generating"/>
    <property type="evidence" value="ECO:0007669"/>
    <property type="project" value="UniProtKB-EC"/>
</dbReference>
<dbReference type="GO" id="GO:0050135">
    <property type="term" value="F:NADP+ nucleosidase activity"/>
    <property type="evidence" value="ECO:0000314"/>
    <property type="project" value="UniProtKB"/>
</dbReference>
<dbReference type="GO" id="GO:0006952">
    <property type="term" value="P:defense response"/>
    <property type="evidence" value="ECO:0007669"/>
    <property type="project" value="UniProtKB-KW"/>
</dbReference>
<dbReference type="GO" id="GO:0019677">
    <property type="term" value="P:NAD catabolic process"/>
    <property type="evidence" value="ECO:0000314"/>
    <property type="project" value="UniProtKB"/>
</dbReference>
<dbReference type="GO" id="GO:0043068">
    <property type="term" value="P:positive regulation of programmed cell death"/>
    <property type="evidence" value="ECO:0000314"/>
    <property type="project" value="UniProtKB"/>
</dbReference>
<dbReference type="GO" id="GO:0007165">
    <property type="term" value="P:signal transduction"/>
    <property type="evidence" value="ECO:0007669"/>
    <property type="project" value="InterPro"/>
</dbReference>
<dbReference type="Gene3D" id="3.40.50.10140">
    <property type="entry name" value="Toll/interleukin-1 receptor homology (TIR) domain"/>
    <property type="match status" value="1"/>
</dbReference>
<dbReference type="InterPro" id="IPR000157">
    <property type="entry name" value="TIR_dom"/>
</dbReference>
<dbReference type="InterPro" id="IPR035897">
    <property type="entry name" value="Toll_tir_struct_dom_sf"/>
</dbReference>
<dbReference type="PANTHER" id="PTHR32009:SF131">
    <property type="entry name" value="OS07G0566800 PROTEIN"/>
    <property type="match status" value="1"/>
</dbReference>
<dbReference type="PANTHER" id="PTHR32009">
    <property type="entry name" value="TMV RESISTANCE PROTEIN N-LIKE"/>
    <property type="match status" value="1"/>
</dbReference>
<dbReference type="Pfam" id="PF13676">
    <property type="entry name" value="TIR_2"/>
    <property type="match status" value="1"/>
</dbReference>
<dbReference type="SMART" id="SM00255">
    <property type="entry name" value="TIR"/>
    <property type="match status" value="1"/>
</dbReference>
<dbReference type="SUPFAM" id="SSF52200">
    <property type="entry name" value="Toll/Interleukin receptor TIR domain"/>
    <property type="match status" value="1"/>
</dbReference>
<dbReference type="PROSITE" id="PS50104">
    <property type="entry name" value="TIR"/>
    <property type="match status" value="1"/>
</dbReference>
<accession>I1GTC2</accession>
<comment type="function">
    <text evidence="4 5 8">An NAD(+) hydrolase (NADase). Upon activation catalyzes cleavage of NAD(+) into ADP-D-ribose (ADPR) and nicotinamide; NAD(+) cleavage triggers a defense system that promotes cell death (PubMed:31439793). In addition to ADPR, also generates a cyclization variant of cyclic ADPR termed v-cADPR (2'cADPR) (PubMed:31439793). Also hydrolyzes NADP(+), but not other NAD(+)-related molecules (PubMed:31439793). v-cADPR activates ThsA, an NAD(+) hydrolase in B.cereus (AC J8G6Z1) (PubMed:34853457). Probably makes 2'cADPR; the cADPR made by this protein is bound by cmTad1 (AC P0DW61) and activates ThsA from B.cereus (PubMed:36174646). Boiling cmTad1 bound to the cyclic nucleotide releases 2'cADPR, strongly suggesting it is the product of this protein (Probable) (PubMed:36174646).</text>
</comment>
<comment type="catalytic activity">
    <reaction evidence="4">
        <text>NAD(+) + H2O = ADP-D-ribose + nicotinamide + H(+)</text>
        <dbReference type="Rhea" id="RHEA:16301"/>
        <dbReference type="ChEBI" id="CHEBI:15377"/>
        <dbReference type="ChEBI" id="CHEBI:15378"/>
        <dbReference type="ChEBI" id="CHEBI:17154"/>
        <dbReference type="ChEBI" id="CHEBI:57540"/>
        <dbReference type="ChEBI" id="CHEBI:57967"/>
        <dbReference type="EC" id="3.2.2.6"/>
    </reaction>
    <physiologicalReaction direction="left-to-right" evidence="4">
        <dbReference type="Rhea" id="RHEA:16302"/>
    </physiologicalReaction>
</comment>
<comment type="catalytic activity">
    <reaction evidence="4">
        <text>NADP(+) + H2O = ADP-D-ribose 2'-phosphate + nicotinamide + H(+)</text>
        <dbReference type="Rhea" id="RHEA:19849"/>
        <dbReference type="ChEBI" id="CHEBI:15377"/>
        <dbReference type="ChEBI" id="CHEBI:15378"/>
        <dbReference type="ChEBI" id="CHEBI:17154"/>
        <dbReference type="ChEBI" id="CHEBI:58349"/>
        <dbReference type="ChEBI" id="CHEBI:58673"/>
    </reaction>
    <physiologicalReaction direction="left-to-right" evidence="4">
        <dbReference type="Rhea" id="RHEA:19850"/>
    </physiologicalReaction>
</comment>
<comment type="catalytic activity">
    <reaction evidence="8">
        <text>NAD(+) = 2'cADPR + nicotinamide + H(+)</text>
        <dbReference type="Rhea" id="RHEA:75299"/>
        <dbReference type="ChEBI" id="CHEBI:15378"/>
        <dbReference type="ChEBI" id="CHEBI:17154"/>
        <dbReference type="ChEBI" id="CHEBI:57540"/>
        <dbReference type="ChEBI" id="CHEBI:194248"/>
    </reaction>
</comment>
<comment type="subunit">
    <text evidence="1">Homodimer.</text>
</comment>
<comment type="domain">
    <text evidence="4 7">The TIR domain catalyzes the NAD(+) cleavage (NADase) activity (PubMed:31439793). In contrast to classical TIR-NB-LRR receptor-like proteins, only contains a TIR domain (Probable).</text>
</comment>
<organism>
    <name type="scientific">Brachypodium distachyon</name>
    <name type="common">Purple false brome</name>
    <name type="synonym">Trachynia distachya</name>
    <dbReference type="NCBI Taxonomy" id="15368"/>
    <lineage>
        <taxon>Eukaryota</taxon>
        <taxon>Viridiplantae</taxon>
        <taxon>Streptophyta</taxon>
        <taxon>Embryophyta</taxon>
        <taxon>Tracheophyta</taxon>
        <taxon>Spermatophyta</taxon>
        <taxon>Magnoliopsida</taxon>
        <taxon>Liliopsida</taxon>
        <taxon>Poales</taxon>
        <taxon>Poaceae</taxon>
        <taxon>BOP clade</taxon>
        <taxon>Pooideae</taxon>
        <taxon>Stipodae</taxon>
        <taxon>Brachypodieae</taxon>
        <taxon>Brachypodium</taxon>
    </lineage>
</organism>
<sequence>MASSGLSSRRSIMASRLTASAEAVNEPRRGAVVSRRVEYDEESLAGAGGESRYEVFINHRGVDTKRTVARLLYDRLAQAGLRGFLDNMSMRPGDRLEERIGSAIRECTVAVAIFSPSYCDSEYCLRELAMLVESRKAIIPIFYDIKPSDLLLPQAVADSEVYLPRDLERFKFALREAKHTVGITYDSATGDMAELVSAAADAVMYNMEKMETVQRRETMILSRL</sequence>
<evidence type="ECO:0000250" key="1">
    <source>
        <dbReference type="UniProtKB" id="A0A009IHW8"/>
    </source>
</evidence>
<evidence type="ECO:0000250" key="2">
    <source>
        <dbReference type="UniProtKB" id="V9M398"/>
    </source>
</evidence>
<evidence type="ECO:0000255" key="3">
    <source>
        <dbReference type="PROSITE-ProRule" id="PRU00204"/>
    </source>
</evidence>
<evidence type="ECO:0000269" key="4">
    <source>
    </source>
</evidence>
<evidence type="ECO:0000269" key="5">
    <source>
    </source>
</evidence>
<evidence type="ECO:0000303" key="6">
    <source>
    </source>
</evidence>
<evidence type="ECO:0000305" key="7"/>
<evidence type="ECO:0000305" key="8">
    <source>
    </source>
</evidence>
<evidence type="ECO:0000312" key="9">
    <source>
        <dbReference type="EMBL" id="KQK15683.1"/>
    </source>
</evidence>
<name>BDTIR_BRADI</name>
<keyword id="KW-0378">Hydrolase</keyword>
<keyword id="KW-0520">NAD</keyword>
<keyword id="KW-0611">Plant defense</keyword>
<keyword id="KW-1185">Reference proteome</keyword>
<gene>
    <name evidence="9" type="ORF">BRADI_1g24377v3</name>
</gene>
<reference key="1">
    <citation type="journal article" date="2010" name="Nature">
        <title>Genome sequencing and analysis of the model grass Brachypodium distachyon.</title>
        <authorList>
            <consortium name="International Brachypodium Initiative"/>
        </authorList>
    </citation>
    <scope>NUCLEOTIDE SEQUENCE [LARGE SCALE GENOMIC DNA]</scope>
    <source>
        <strain>cv. Bd21</strain>
    </source>
</reference>
<reference key="2">
    <citation type="journal article" date="2019" name="Science">
        <title>TIR domains of plant immune receptors are NAD+-cleaving enzymes that promote cell death.</title>
        <authorList>
            <person name="Wan L."/>
            <person name="Essuman K."/>
            <person name="Anderson R.G."/>
            <person name="Sasaki Y."/>
            <person name="Monteiro F."/>
            <person name="Chung E.H."/>
            <person name="Osborne Nishimura E."/>
            <person name="DiAntonio A."/>
            <person name="Milbrandt J."/>
            <person name="Dangl J.L."/>
            <person name="Nishimura M.T."/>
        </authorList>
    </citation>
    <scope>FUNCTION</scope>
    <scope>CATALYTIC ACTIVITY</scope>
</reference>
<reference key="3">
    <citation type="journal article" date="2021" name="Nature">
        <title>Antiviral activity of bacterial TIR domains via immune signalling molecules.</title>
        <authorList>
            <person name="Ofir G."/>
            <person name="Herbst E."/>
            <person name="Baroz M."/>
            <person name="Cohen D."/>
            <person name="Millman A."/>
            <person name="Doron S."/>
            <person name="Tal N."/>
            <person name="Malheiro D.B.A."/>
            <person name="Malitsky S."/>
            <person name="Amitai G."/>
            <person name="Sorek R."/>
        </authorList>
    </citation>
    <scope>FUNCTION</scope>
</reference>
<reference key="4">
    <citation type="journal article" date="2022" name="Nature">
        <title>Viruses inhibit TIR gcADPR signalling to overcome bacterial defence.</title>
        <authorList>
            <person name="Leavitt A."/>
            <person name="Yirmiya E."/>
            <person name="Amitai G."/>
            <person name="Lu A."/>
            <person name="Garb J."/>
            <person name="Herbst E."/>
            <person name="Morehouse B.R."/>
            <person name="Hobbs S.J."/>
            <person name="Antine S.P."/>
            <person name="Sun Z.J."/>
            <person name="Kranzusch P.J."/>
            <person name="Sorek R."/>
        </authorList>
    </citation>
    <scope>FUNCTION</scope>
    <scope>PROBABLE CATALYTIC ACTIVITY</scope>
</reference>
<protein>
    <recommendedName>
        <fullName evidence="7">Probable 2' cyclic ADP-D-ribose synthase BdTIR</fullName>
        <shortName evidence="7">Probable 2'cADPR synthase AbTIR</shortName>
        <ecNumber evidence="8">3.2.2.-</ecNumber>
    </recommendedName>
    <alternativeName>
        <fullName>NAD(+) hydrolase TIR</fullName>
        <ecNumber evidence="4">3.2.2.6</ecNumber>
    </alternativeName>
    <alternativeName>
        <fullName evidence="7">NADP(+) hydrolase TIR</fullName>
        <ecNumber evidence="4">3.2.2.-</ecNumber>
    </alternativeName>
    <alternativeName>
        <fullName evidence="6">TIR-only protein</fullName>
        <shortName evidence="6">BdTIR</shortName>
    </alternativeName>
</protein>